<organism>
    <name type="scientific">Campylobacter hominis (strain ATCC BAA-381 / DSM 21671 / CCUG 45161 / LMG 19568 / NCTC 13146 / CH001A)</name>
    <dbReference type="NCBI Taxonomy" id="360107"/>
    <lineage>
        <taxon>Bacteria</taxon>
        <taxon>Pseudomonadati</taxon>
        <taxon>Campylobacterota</taxon>
        <taxon>Epsilonproteobacteria</taxon>
        <taxon>Campylobacterales</taxon>
        <taxon>Campylobacteraceae</taxon>
        <taxon>Campylobacter</taxon>
    </lineage>
</organism>
<dbReference type="EMBL" id="CP000776">
    <property type="protein sequence ID" value="ABS51144.1"/>
    <property type="molecule type" value="Genomic_DNA"/>
</dbReference>
<dbReference type="RefSeq" id="WP_011991508.1">
    <property type="nucleotide sequence ID" value="NC_009714.1"/>
</dbReference>
<dbReference type="SMR" id="A7HZH0"/>
<dbReference type="STRING" id="360107.CHAB381_0039"/>
<dbReference type="KEGG" id="cha:CHAB381_0039"/>
<dbReference type="eggNOG" id="COG0828">
    <property type="taxonomic scope" value="Bacteria"/>
</dbReference>
<dbReference type="HOGENOM" id="CLU_159258_1_1_7"/>
<dbReference type="OrthoDB" id="9799244at2"/>
<dbReference type="Proteomes" id="UP000002407">
    <property type="component" value="Chromosome"/>
</dbReference>
<dbReference type="GO" id="GO:1990904">
    <property type="term" value="C:ribonucleoprotein complex"/>
    <property type="evidence" value="ECO:0007669"/>
    <property type="project" value="UniProtKB-KW"/>
</dbReference>
<dbReference type="GO" id="GO:0005840">
    <property type="term" value="C:ribosome"/>
    <property type="evidence" value="ECO:0007669"/>
    <property type="project" value="UniProtKB-KW"/>
</dbReference>
<dbReference type="GO" id="GO:0003735">
    <property type="term" value="F:structural constituent of ribosome"/>
    <property type="evidence" value="ECO:0007669"/>
    <property type="project" value="InterPro"/>
</dbReference>
<dbReference type="GO" id="GO:0006412">
    <property type="term" value="P:translation"/>
    <property type="evidence" value="ECO:0007669"/>
    <property type="project" value="UniProtKB-UniRule"/>
</dbReference>
<dbReference type="Gene3D" id="1.20.5.1150">
    <property type="entry name" value="Ribosomal protein S8"/>
    <property type="match status" value="1"/>
</dbReference>
<dbReference type="HAMAP" id="MF_00358">
    <property type="entry name" value="Ribosomal_bS21"/>
    <property type="match status" value="1"/>
</dbReference>
<dbReference type="InterPro" id="IPR001911">
    <property type="entry name" value="Ribosomal_bS21"/>
</dbReference>
<dbReference type="InterPro" id="IPR018278">
    <property type="entry name" value="Ribosomal_bS21_CS"/>
</dbReference>
<dbReference type="InterPro" id="IPR038380">
    <property type="entry name" value="Ribosomal_bS21_sf"/>
</dbReference>
<dbReference type="NCBIfam" id="TIGR00030">
    <property type="entry name" value="S21p"/>
    <property type="match status" value="1"/>
</dbReference>
<dbReference type="Pfam" id="PF01165">
    <property type="entry name" value="Ribosomal_S21"/>
    <property type="match status" value="1"/>
</dbReference>
<dbReference type="PRINTS" id="PR00976">
    <property type="entry name" value="RIBOSOMALS21"/>
</dbReference>
<dbReference type="PROSITE" id="PS01181">
    <property type="entry name" value="RIBOSOMAL_S21"/>
    <property type="match status" value="1"/>
</dbReference>
<gene>
    <name evidence="1" type="primary">rpsU</name>
    <name type="ordered locus">CHAB381_0039</name>
</gene>
<reference key="1">
    <citation type="submission" date="2007-07" db="EMBL/GenBank/DDBJ databases">
        <title>Complete genome sequence of Campylobacter hominis ATCC BAA-381, a commensal isolated from the human gastrointestinal tract.</title>
        <authorList>
            <person name="Fouts D.E."/>
            <person name="Mongodin E.F."/>
            <person name="Puiu D."/>
            <person name="Sebastian Y."/>
            <person name="Miller W.G."/>
            <person name="Mandrell R.E."/>
            <person name="Nelson K.E."/>
        </authorList>
    </citation>
    <scope>NUCLEOTIDE SEQUENCE [LARGE SCALE GENOMIC DNA]</scope>
    <source>
        <strain>ATCC BAA-381 / DSM 21671 / CCUG 45161 / LMG 19568 / NCTC 13146 / CH001A</strain>
    </source>
</reference>
<evidence type="ECO:0000255" key="1">
    <source>
        <dbReference type="HAMAP-Rule" id="MF_00358"/>
    </source>
</evidence>
<evidence type="ECO:0000305" key="2"/>
<proteinExistence type="inferred from homology"/>
<accession>A7HZH0</accession>
<keyword id="KW-1185">Reference proteome</keyword>
<keyword id="KW-0687">Ribonucleoprotein</keyword>
<keyword id="KW-0689">Ribosomal protein</keyword>
<protein>
    <recommendedName>
        <fullName evidence="1">Small ribosomal subunit protein bS21</fullName>
    </recommendedName>
    <alternativeName>
        <fullName evidence="2">30S ribosomal protein S21</fullName>
    </alternativeName>
</protein>
<comment type="similarity">
    <text evidence="1">Belongs to the bacterial ribosomal protein bS21 family.</text>
</comment>
<feature type="chain" id="PRO_1000005104" description="Small ribosomal subunit protein bS21">
    <location>
        <begin position="1"/>
        <end position="70"/>
    </location>
</feature>
<name>RS21_CAMHC</name>
<sequence length="70" mass="8632">MPGIKVYPNESFDEAYRRFKKQTDRNLVVTEVSARRFFEPMTEIRKKQKISARKKMLKRLYMLRRYESKL</sequence>